<feature type="chain" id="PRO_0000277953" description="Putative pterin-4-alpha-carbinolamine dehydratase">
    <location>
        <begin position="1"/>
        <end position="113"/>
    </location>
</feature>
<name>PHS_RICBR</name>
<protein>
    <recommendedName>
        <fullName evidence="1">Putative pterin-4-alpha-carbinolamine dehydratase</fullName>
        <shortName evidence="1">PHS</shortName>
        <ecNumber evidence="1">4.2.1.96</ecNumber>
    </recommendedName>
    <alternativeName>
        <fullName evidence="1">4-alpha-hydroxy-tetrahydropterin dehydratase</fullName>
    </alternativeName>
    <alternativeName>
        <fullName evidence="1">Pterin carbinolamine dehydratase</fullName>
        <shortName evidence="1">PCD</shortName>
    </alternativeName>
</protein>
<sequence>MTITCSLSDKKCIPCEGGVPPLEKKEIDKLLSELQNEWIVNESGHLYKKYKFPDFMQPIEFANKIAALAEQEVHHPDLTISWGACIVEIWTHKIDGLTESDFILAAKIDLLQN</sequence>
<proteinExistence type="inferred from homology"/>
<keyword id="KW-0456">Lyase</keyword>
<reference key="1">
    <citation type="journal article" date="2006" name="PLoS Genet.">
        <title>Genome sequence of Rickettsia bellii illuminates the role of amoebae in gene exchanges between intracellular pathogens.</title>
        <authorList>
            <person name="Ogata H."/>
            <person name="La Scola B."/>
            <person name="Audic S."/>
            <person name="Renesto P."/>
            <person name="Blanc G."/>
            <person name="Robert C."/>
            <person name="Fournier P.-E."/>
            <person name="Claverie J.-M."/>
            <person name="Raoult D."/>
        </authorList>
    </citation>
    <scope>NUCLEOTIDE SEQUENCE [LARGE SCALE GENOMIC DNA]</scope>
    <source>
        <strain>RML369-C</strain>
    </source>
</reference>
<gene>
    <name type="ordered locus">RBE_1407</name>
</gene>
<organism>
    <name type="scientific">Rickettsia bellii (strain RML369-C)</name>
    <dbReference type="NCBI Taxonomy" id="336407"/>
    <lineage>
        <taxon>Bacteria</taxon>
        <taxon>Pseudomonadati</taxon>
        <taxon>Pseudomonadota</taxon>
        <taxon>Alphaproteobacteria</taxon>
        <taxon>Rickettsiales</taxon>
        <taxon>Rickettsiaceae</taxon>
        <taxon>Rickettsieae</taxon>
        <taxon>Rickettsia</taxon>
        <taxon>belli group</taxon>
    </lineage>
</organism>
<dbReference type="EC" id="4.2.1.96" evidence="1"/>
<dbReference type="EMBL" id="CP000087">
    <property type="protein sequence ID" value="ABE05488.1"/>
    <property type="molecule type" value="Genomic_DNA"/>
</dbReference>
<dbReference type="RefSeq" id="WP_011478057.1">
    <property type="nucleotide sequence ID" value="NC_007940.1"/>
</dbReference>
<dbReference type="SMR" id="Q1RGM6"/>
<dbReference type="KEGG" id="rbe:RBE_1407"/>
<dbReference type="eggNOG" id="COG2154">
    <property type="taxonomic scope" value="Bacteria"/>
</dbReference>
<dbReference type="HOGENOM" id="CLU_081974_2_2_5"/>
<dbReference type="OrthoDB" id="9794987at2"/>
<dbReference type="Proteomes" id="UP000001951">
    <property type="component" value="Chromosome"/>
</dbReference>
<dbReference type="GO" id="GO:0008124">
    <property type="term" value="F:4-alpha-hydroxytetrahydrobiopterin dehydratase activity"/>
    <property type="evidence" value="ECO:0007669"/>
    <property type="project" value="UniProtKB-UniRule"/>
</dbReference>
<dbReference type="GO" id="GO:0006729">
    <property type="term" value="P:tetrahydrobiopterin biosynthetic process"/>
    <property type="evidence" value="ECO:0007669"/>
    <property type="project" value="InterPro"/>
</dbReference>
<dbReference type="CDD" id="cd00913">
    <property type="entry name" value="PCD_DCoH_subfamily_a"/>
    <property type="match status" value="1"/>
</dbReference>
<dbReference type="Gene3D" id="3.30.1360.20">
    <property type="entry name" value="Transcriptional coactivator/pterin dehydratase"/>
    <property type="match status" value="1"/>
</dbReference>
<dbReference type="HAMAP" id="MF_00434">
    <property type="entry name" value="Pterin_4_alpha"/>
    <property type="match status" value="1"/>
</dbReference>
<dbReference type="InterPro" id="IPR036428">
    <property type="entry name" value="PCD_sf"/>
</dbReference>
<dbReference type="InterPro" id="IPR001533">
    <property type="entry name" value="Pterin_deHydtase"/>
</dbReference>
<dbReference type="NCBIfam" id="NF002017">
    <property type="entry name" value="PRK00823.1-2"/>
    <property type="match status" value="1"/>
</dbReference>
<dbReference type="PANTHER" id="PTHR12599">
    <property type="entry name" value="PTERIN-4-ALPHA-CARBINOLAMINE DEHYDRATASE"/>
    <property type="match status" value="1"/>
</dbReference>
<dbReference type="PANTHER" id="PTHR12599:SF0">
    <property type="entry name" value="PTERIN-4-ALPHA-CARBINOLAMINE DEHYDRATASE"/>
    <property type="match status" value="1"/>
</dbReference>
<dbReference type="Pfam" id="PF01329">
    <property type="entry name" value="Pterin_4a"/>
    <property type="match status" value="1"/>
</dbReference>
<dbReference type="SUPFAM" id="SSF55248">
    <property type="entry name" value="PCD-like"/>
    <property type="match status" value="1"/>
</dbReference>
<comment type="catalytic activity">
    <reaction evidence="1">
        <text>(4aS,6R)-4a-hydroxy-L-erythro-5,6,7,8-tetrahydrobiopterin = (6R)-L-erythro-6,7-dihydrobiopterin + H2O</text>
        <dbReference type="Rhea" id="RHEA:11920"/>
        <dbReference type="ChEBI" id="CHEBI:15377"/>
        <dbReference type="ChEBI" id="CHEBI:15642"/>
        <dbReference type="ChEBI" id="CHEBI:43120"/>
        <dbReference type="EC" id="4.2.1.96"/>
    </reaction>
</comment>
<comment type="similarity">
    <text evidence="1">Belongs to the pterin-4-alpha-carbinolamine dehydratase family.</text>
</comment>
<accession>Q1RGM6</accession>
<evidence type="ECO:0000255" key="1">
    <source>
        <dbReference type="HAMAP-Rule" id="MF_00434"/>
    </source>
</evidence>